<proteinExistence type="inferred from homology"/>
<protein>
    <recommendedName>
        <fullName evidence="1">Large ribosomal subunit protein bL35</fullName>
    </recommendedName>
    <alternativeName>
        <fullName evidence="2">50S ribosomal protein L35</fullName>
    </alternativeName>
</protein>
<name>RL35_CERS1</name>
<reference key="1">
    <citation type="submission" date="2007-02" db="EMBL/GenBank/DDBJ databases">
        <title>Complete sequence of chromosome 1 of Rhodobacter sphaeroides ATCC 17029.</title>
        <authorList>
            <person name="Copeland A."/>
            <person name="Lucas S."/>
            <person name="Lapidus A."/>
            <person name="Barry K."/>
            <person name="Detter J.C."/>
            <person name="Glavina del Rio T."/>
            <person name="Hammon N."/>
            <person name="Israni S."/>
            <person name="Dalin E."/>
            <person name="Tice H."/>
            <person name="Pitluck S."/>
            <person name="Kiss H."/>
            <person name="Brettin T."/>
            <person name="Bruce D."/>
            <person name="Han C."/>
            <person name="Tapia R."/>
            <person name="Gilna P."/>
            <person name="Schmutz J."/>
            <person name="Larimer F."/>
            <person name="Land M."/>
            <person name="Hauser L."/>
            <person name="Kyrpides N."/>
            <person name="Mikhailova N."/>
            <person name="Richardson P."/>
            <person name="Mackenzie C."/>
            <person name="Choudhary M."/>
            <person name="Donohue T.J."/>
            <person name="Kaplan S."/>
        </authorList>
    </citation>
    <scope>NUCLEOTIDE SEQUENCE [LARGE SCALE GENOMIC DNA]</scope>
    <source>
        <strain>ATCC 17029 / ATH 2.4.9</strain>
    </source>
</reference>
<gene>
    <name evidence="1" type="primary">rpmI</name>
    <name type="ordered locus">Rsph17029_0411</name>
</gene>
<dbReference type="EMBL" id="CP000577">
    <property type="protein sequence ID" value="ABN75527.1"/>
    <property type="molecule type" value="Genomic_DNA"/>
</dbReference>
<dbReference type="RefSeq" id="WP_002722593.1">
    <property type="nucleotide sequence ID" value="NC_009049.1"/>
</dbReference>
<dbReference type="SMR" id="A3PGR1"/>
<dbReference type="GeneID" id="67445551"/>
<dbReference type="KEGG" id="rsh:Rsph17029_0411"/>
<dbReference type="HOGENOM" id="CLU_169643_2_1_5"/>
<dbReference type="GO" id="GO:0022625">
    <property type="term" value="C:cytosolic large ribosomal subunit"/>
    <property type="evidence" value="ECO:0007669"/>
    <property type="project" value="TreeGrafter"/>
</dbReference>
<dbReference type="GO" id="GO:0003735">
    <property type="term" value="F:structural constituent of ribosome"/>
    <property type="evidence" value="ECO:0007669"/>
    <property type="project" value="InterPro"/>
</dbReference>
<dbReference type="GO" id="GO:0006412">
    <property type="term" value="P:translation"/>
    <property type="evidence" value="ECO:0007669"/>
    <property type="project" value="UniProtKB-UniRule"/>
</dbReference>
<dbReference type="FunFam" id="4.10.410.60:FF:000001">
    <property type="entry name" value="50S ribosomal protein L35"/>
    <property type="match status" value="1"/>
</dbReference>
<dbReference type="Gene3D" id="4.10.410.60">
    <property type="match status" value="1"/>
</dbReference>
<dbReference type="HAMAP" id="MF_00514">
    <property type="entry name" value="Ribosomal_bL35"/>
    <property type="match status" value="1"/>
</dbReference>
<dbReference type="InterPro" id="IPR001706">
    <property type="entry name" value="Ribosomal_bL35"/>
</dbReference>
<dbReference type="InterPro" id="IPR021137">
    <property type="entry name" value="Ribosomal_bL35-like"/>
</dbReference>
<dbReference type="InterPro" id="IPR018265">
    <property type="entry name" value="Ribosomal_bL35_CS"/>
</dbReference>
<dbReference type="InterPro" id="IPR037229">
    <property type="entry name" value="Ribosomal_bL35_sf"/>
</dbReference>
<dbReference type="NCBIfam" id="TIGR00001">
    <property type="entry name" value="rpmI_bact"/>
    <property type="match status" value="1"/>
</dbReference>
<dbReference type="PANTHER" id="PTHR33343">
    <property type="entry name" value="54S RIBOSOMAL PROTEIN BL35M"/>
    <property type="match status" value="1"/>
</dbReference>
<dbReference type="PANTHER" id="PTHR33343:SF1">
    <property type="entry name" value="LARGE RIBOSOMAL SUBUNIT PROTEIN BL35M"/>
    <property type="match status" value="1"/>
</dbReference>
<dbReference type="Pfam" id="PF01632">
    <property type="entry name" value="Ribosomal_L35p"/>
    <property type="match status" value="1"/>
</dbReference>
<dbReference type="PRINTS" id="PR00064">
    <property type="entry name" value="RIBOSOMALL35"/>
</dbReference>
<dbReference type="SUPFAM" id="SSF143034">
    <property type="entry name" value="L35p-like"/>
    <property type="match status" value="1"/>
</dbReference>
<dbReference type="PROSITE" id="PS00936">
    <property type="entry name" value="RIBOSOMAL_L35"/>
    <property type="match status" value="1"/>
</dbReference>
<keyword id="KW-0687">Ribonucleoprotein</keyword>
<keyword id="KW-0689">Ribosomal protein</keyword>
<sequence length="66" mass="7379">MPKMKTKSAAKKRFSFTATGKVKAGPAGKRHGMIKRSTKFIRDVTGTMILSDADAKIVKKYMPYDR</sequence>
<comment type="similarity">
    <text evidence="1">Belongs to the bacterial ribosomal protein bL35 family.</text>
</comment>
<accession>A3PGR1</accession>
<evidence type="ECO:0000255" key="1">
    <source>
        <dbReference type="HAMAP-Rule" id="MF_00514"/>
    </source>
</evidence>
<evidence type="ECO:0000305" key="2"/>
<feature type="chain" id="PRO_1000050753" description="Large ribosomal subunit protein bL35">
    <location>
        <begin position="1"/>
        <end position="66"/>
    </location>
</feature>
<organism>
    <name type="scientific">Cereibacter sphaeroides (strain ATCC 17029 / ATH 2.4.9)</name>
    <name type="common">Rhodobacter sphaeroides</name>
    <dbReference type="NCBI Taxonomy" id="349101"/>
    <lineage>
        <taxon>Bacteria</taxon>
        <taxon>Pseudomonadati</taxon>
        <taxon>Pseudomonadota</taxon>
        <taxon>Alphaproteobacteria</taxon>
        <taxon>Rhodobacterales</taxon>
        <taxon>Paracoccaceae</taxon>
        <taxon>Cereibacter</taxon>
    </lineage>
</organism>